<sequence length="645" mass="76135">MSVINCEEVKRDEFHTEKYYESYNIFGAHIVTEDEMRGVRFTVWAPHAKAMSVVGDFNEWDYEQHKMLQVTEEGIWSLFIPHIEEREIYKYAIETMAGDVIFKADPYAVYAEVRPNTASVVFDIKGYEWNDKNWSRKKKKKSVYKEAMTVYELHFGSWKKKEDGTLYSYREMAEELIPYVVEHQFTHIEIMPLVEHPYDRSWGYQGTGYYAATSRFGTPYDLMHFVDECHKYGIGVILDWVPGHFCKDAHGLYLFDGTPTYEYKDKDVQENPVWGTVNFDLGKREVRNFLISNALFWMRYFHIDGFRVDAVANMLYWNKEGQEQSNEHAVSFLRELNEAVFAEDEDFLMTAEDSTAWPLVTAPTYEGGLGFNYKWNMGWMNDVLKYMECAPEYRKYIHDKMTFSLLYTYSENFILPLSHDEVVHGKKSLLNKMPGDYWDKFAQLRLLYGYFFTHPGKKLLFMGGEFGQFDEWKDLEDLDWNLHDFEMHRYMHDYFKELIALYKRSKPLWQLDHSREGFQWIDANNNEQSIFSFIRQGDKQEDALVVVCNFTKATYENYKVGVPDFEYYNEILNSDAEQYGGSGQVNKKRLKTIQEPYHNQTAHVEITIPPFGVSILRPVKTRKGSKKQDGSKTKVRSNVTSRGKR</sequence>
<name>GLGB_BACC3</name>
<gene>
    <name evidence="1" type="primary">glgB</name>
    <name type="ordered locus">BCA_5002</name>
</gene>
<keyword id="KW-0119">Carbohydrate metabolism</keyword>
<keyword id="KW-0320">Glycogen biosynthesis</keyword>
<keyword id="KW-0321">Glycogen metabolism</keyword>
<keyword id="KW-0328">Glycosyltransferase</keyword>
<keyword id="KW-0808">Transferase</keyword>
<reference key="1">
    <citation type="submission" date="2009-02" db="EMBL/GenBank/DDBJ databases">
        <title>Genome sequence of Bacillus cereus 03BB102.</title>
        <authorList>
            <person name="Dodson R.J."/>
            <person name="Jackson P."/>
            <person name="Munk A.C."/>
            <person name="Brettin T."/>
            <person name="Bruce D."/>
            <person name="Detter C."/>
            <person name="Tapia R."/>
            <person name="Han C."/>
            <person name="Sutton G."/>
            <person name="Sims D."/>
        </authorList>
    </citation>
    <scope>NUCLEOTIDE SEQUENCE [LARGE SCALE GENOMIC DNA]</scope>
    <source>
        <strain>03BB102</strain>
    </source>
</reference>
<feature type="chain" id="PRO_1000147757" description="1,4-alpha-glucan branching enzyme GlgB">
    <location>
        <begin position="1"/>
        <end position="645"/>
    </location>
</feature>
<feature type="region of interest" description="Disordered" evidence="2">
    <location>
        <begin position="619"/>
        <end position="645"/>
    </location>
</feature>
<feature type="compositionally biased region" description="Polar residues" evidence="2">
    <location>
        <begin position="636"/>
        <end position="645"/>
    </location>
</feature>
<feature type="active site" description="Nucleophile" evidence="1">
    <location>
        <position position="309"/>
    </location>
</feature>
<feature type="active site" description="Proton donor" evidence="1">
    <location>
        <position position="352"/>
    </location>
</feature>
<comment type="function">
    <text evidence="1">Catalyzes the formation of the alpha-1,6-glucosidic linkages in glycogen by scission of a 1,4-alpha-linked oligosaccharide from growing alpha-1,4-glucan chains and the subsequent attachment of the oligosaccharide to the alpha-1,6 position.</text>
</comment>
<comment type="catalytic activity">
    <reaction evidence="1">
        <text>Transfers a segment of a (1-&gt;4)-alpha-D-glucan chain to a primary hydroxy group in a similar glucan chain.</text>
        <dbReference type="EC" id="2.4.1.18"/>
    </reaction>
</comment>
<comment type="pathway">
    <text evidence="1">Glycan biosynthesis; glycogen biosynthesis.</text>
</comment>
<comment type="subunit">
    <text evidence="1">Monomer.</text>
</comment>
<comment type="similarity">
    <text evidence="1">Belongs to the glycosyl hydrolase 13 family. GlgB subfamily.</text>
</comment>
<proteinExistence type="inferred from homology"/>
<accession>C1EX54</accession>
<organism>
    <name type="scientific">Bacillus cereus (strain 03BB102)</name>
    <dbReference type="NCBI Taxonomy" id="572264"/>
    <lineage>
        <taxon>Bacteria</taxon>
        <taxon>Bacillati</taxon>
        <taxon>Bacillota</taxon>
        <taxon>Bacilli</taxon>
        <taxon>Bacillales</taxon>
        <taxon>Bacillaceae</taxon>
        <taxon>Bacillus</taxon>
        <taxon>Bacillus cereus group</taxon>
    </lineage>
</organism>
<dbReference type="EC" id="2.4.1.18" evidence="1"/>
<dbReference type="EMBL" id="CP001407">
    <property type="protein sequence ID" value="ACO26228.1"/>
    <property type="molecule type" value="Genomic_DNA"/>
</dbReference>
<dbReference type="RefSeq" id="WP_000111387.1">
    <property type="nucleotide sequence ID" value="NZ_CP009318.1"/>
</dbReference>
<dbReference type="SMR" id="C1EX54"/>
<dbReference type="CAZy" id="CBM48">
    <property type="family name" value="Carbohydrate-Binding Module Family 48"/>
</dbReference>
<dbReference type="CAZy" id="GH13">
    <property type="family name" value="Glycoside Hydrolase Family 13"/>
</dbReference>
<dbReference type="KEGG" id="bcx:BCA_5002"/>
<dbReference type="PATRIC" id="fig|572264.18.peg.4949"/>
<dbReference type="UniPathway" id="UPA00164"/>
<dbReference type="Proteomes" id="UP000002210">
    <property type="component" value="Chromosome"/>
</dbReference>
<dbReference type="GO" id="GO:0005829">
    <property type="term" value="C:cytosol"/>
    <property type="evidence" value="ECO:0007669"/>
    <property type="project" value="TreeGrafter"/>
</dbReference>
<dbReference type="GO" id="GO:0003844">
    <property type="term" value="F:1,4-alpha-glucan branching enzyme activity"/>
    <property type="evidence" value="ECO:0007669"/>
    <property type="project" value="UniProtKB-UniRule"/>
</dbReference>
<dbReference type="GO" id="GO:0043169">
    <property type="term" value="F:cation binding"/>
    <property type="evidence" value="ECO:0007669"/>
    <property type="project" value="InterPro"/>
</dbReference>
<dbReference type="GO" id="GO:0004553">
    <property type="term" value="F:hydrolase activity, hydrolyzing O-glycosyl compounds"/>
    <property type="evidence" value="ECO:0007669"/>
    <property type="project" value="InterPro"/>
</dbReference>
<dbReference type="GO" id="GO:0005978">
    <property type="term" value="P:glycogen biosynthetic process"/>
    <property type="evidence" value="ECO:0007669"/>
    <property type="project" value="UniProtKB-UniRule"/>
</dbReference>
<dbReference type="CDD" id="cd11322">
    <property type="entry name" value="AmyAc_Glg_BE"/>
    <property type="match status" value="1"/>
</dbReference>
<dbReference type="CDD" id="cd02855">
    <property type="entry name" value="E_set_GBE_prok_N"/>
    <property type="match status" value="1"/>
</dbReference>
<dbReference type="FunFam" id="2.60.40.10:FF:000169">
    <property type="entry name" value="1,4-alpha-glucan branching enzyme GlgB"/>
    <property type="match status" value="1"/>
</dbReference>
<dbReference type="FunFam" id="2.60.40.1180:FF:000002">
    <property type="entry name" value="1,4-alpha-glucan branching enzyme GlgB"/>
    <property type="match status" value="1"/>
</dbReference>
<dbReference type="FunFam" id="3.20.20.80:FF:000003">
    <property type="entry name" value="1,4-alpha-glucan branching enzyme GlgB"/>
    <property type="match status" value="1"/>
</dbReference>
<dbReference type="Gene3D" id="3.20.20.80">
    <property type="entry name" value="Glycosidases"/>
    <property type="match status" value="1"/>
</dbReference>
<dbReference type="Gene3D" id="2.60.40.1180">
    <property type="entry name" value="Golgi alpha-mannosidase II"/>
    <property type="match status" value="1"/>
</dbReference>
<dbReference type="Gene3D" id="2.60.40.10">
    <property type="entry name" value="Immunoglobulins"/>
    <property type="match status" value="1"/>
</dbReference>
<dbReference type="HAMAP" id="MF_00685">
    <property type="entry name" value="GlgB"/>
    <property type="match status" value="1"/>
</dbReference>
<dbReference type="InterPro" id="IPR006048">
    <property type="entry name" value="A-amylase/branching_C"/>
</dbReference>
<dbReference type="InterPro" id="IPR037439">
    <property type="entry name" value="Branching_enzy"/>
</dbReference>
<dbReference type="InterPro" id="IPR006407">
    <property type="entry name" value="GlgB"/>
</dbReference>
<dbReference type="InterPro" id="IPR044143">
    <property type="entry name" value="GlgB_N_E_set_prok"/>
</dbReference>
<dbReference type="InterPro" id="IPR006047">
    <property type="entry name" value="Glyco_hydro_13_cat_dom"/>
</dbReference>
<dbReference type="InterPro" id="IPR004193">
    <property type="entry name" value="Glyco_hydro_13_N"/>
</dbReference>
<dbReference type="InterPro" id="IPR013780">
    <property type="entry name" value="Glyco_hydro_b"/>
</dbReference>
<dbReference type="InterPro" id="IPR017853">
    <property type="entry name" value="Glycoside_hydrolase_SF"/>
</dbReference>
<dbReference type="InterPro" id="IPR013783">
    <property type="entry name" value="Ig-like_fold"/>
</dbReference>
<dbReference type="NCBIfam" id="TIGR01515">
    <property type="entry name" value="branching_enzym"/>
    <property type="match status" value="1"/>
</dbReference>
<dbReference type="NCBIfam" id="NF003811">
    <property type="entry name" value="PRK05402.1"/>
    <property type="match status" value="1"/>
</dbReference>
<dbReference type="NCBIfam" id="NF008967">
    <property type="entry name" value="PRK12313.1"/>
    <property type="match status" value="1"/>
</dbReference>
<dbReference type="PANTHER" id="PTHR43651">
    <property type="entry name" value="1,4-ALPHA-GLUCAN-BRANCHING ENZYME"/>
    <property type="match status" value="1"/>
</dbReference>
<dbReference type="PANTHER" id="PTHR43651:SF3">
    <property type="entry name" value="1,4-ALPHA-GLUCAN-BRANCHING ENZYME"/>
    <property type="match status" value="1"/>
</dbReference>
<dbReference type="Pfam" id="PF00128">
    <property type="entry name" value="Alpha-amylase"/>
    <property type="match status" value="2"/>
</dbReference>
<dbReference type="Pfam" id="PF02806">
    <property type="entry name" value="Alpha-amylase_C"/>
    <property type="match status" value="1"/>
</dbReference>
<dbReference type="Pfam" id="PF02922">
    <property type="entry name" value="CBM_48"/>
    <property type="match status" value="1"/>
</dbReference>
<dbReference type="PIRSF" id="PIRSF000463">
    <property type="entry name" value="GlgB"/>
    <property type="match status" value="1"/>
</dbReference>
<dbReference type="SMART" id="SM00642">
    <property type="entry name" value="Aamy"/>
    <property type="match status" value="1"/>
</dbReference>
<dbReference type="SUPFAM" id="SSF51445">
    <property type="entry name" value="(Trans)glycosidases"/>
    <property type="match status" value="1"/>
</dbReference>
<dbReference type="SUPFAM" id="SSF51011">
    <property type="entry name" value="Glycosyl hydrolase domain"/>
    <property type="match status" value="1"/>
</dbReference>
<protein>
    <recommendedName>
        <fullName evidence="1">1,4-alpha-glucan branching enzyme GlgB</fullName>
        <ecNumber evidence="1">2.4.1.18</ecNumber>
    </recommendedName>
    <alternativeName>
        <fullName evidence="1">1,4-alpha-D-glucan:1,4-alpha-D-glucan 6-glucosyl-transferase</fullName>
    </alternativeName>
    <alternativeName>
        <fullName evidence="1">Alpha-(1-&gt;4)-glucan branching enzyme</fullName>
    </alternativeName>
    <alternativeName>
        <fullName evidence="1">Glycogen branching enzyme</fullName>
        <shortName evidence="1">BE</shortName>
    </alternativeName>
</protein>
<evidence type="ECO:0000255" key="1">
    <source>
        <dbReference type="HAMAP-Rule" id="MF_00685"/>
    </source>
</evidence>
<evidence type="ECO:0000256" key="2">
    <source>
        <dbReference type="SAM" id="MobiDB-lite"/>
    </source>
</evidence>